<evidence type="ECO:0000250" key="1"/>
<evidence type="ECO:0000255" key="2"/>
<evidence type="ECO:0000256" key="3">
    <source>
        <dbReference type="SAM" id="MobiDB-lite"/>
    </source>
</evidence>
<evidence type="ECO:0000305" key="4"/>
<keyword id="KW-0134">Cell wall</keyword>
<keyword id="KW-0217">Developmental protein</keyword>
<keyword id="KW-0677">Repeat</keyword>
<keyword id="KW-0964">Secreted</keyword>
<keyword id="KW-0732">Signal</keyword>
<comment type="function">
    <text evidence="1">This is a developmentally regulated putative cell wall protein.</text>
</comment>
<comment type="subcellular location">
    <subcellularLocation>
        <location evidence="4">Secreted</location>
        <location evidence="4">Cell wall</location>
    </subcellularLocation>
</comment>
<comment type="similarity">
    <text evidence="4">Belongs to the plant proline-rich protein superfamily. ENOD12 family.</text>
</comment>
<protein>
    <recommendedName>
        <fullName>Repetitive proline-rich cell wall protein</fullName>
    </recommendedName>
    <alternativeName>
        <fullName>MSPRP</fullName>
    </alternativeName>
</protein>
<feature type="signal peptide" evidence="2">
    <location>
        <begin position="1"/>
        <end position="22"/>
    </location>
</feature>
<feature type="chain" id="PRO_0000019807" description="Repetitive proline-rich cell wall protein">
    <location>
        <begin position="23"/>
        <end position="236"/>
    </location>
</feature>
<feature type="repeat" description="1">
    <location>
        <begin position="27"/>
        <end position="31"/>
    </location>
</feature>
<feature type="repeat" description="2">
    <location>
        <begin position="32"/>
        <end position="36"/>
    </location>
</feature>
<feature type="repeat" description="3">
    <location>
        <begin position="37"/>
        <end position="41"/>
    </location>
</feature>
<feature type="repeat" description="4">
    <location>
        <begin position="42"/>
        <end position="46"/>
    </location>
</feature>
<feature type="repeat" description="5">
    <location>
        <begin position="47"/>
        <end position="51"/>
    </location>
</feature>
<feature type="repeat" description="6">
    <location>
        <begin position="52"/>
        <end position="56"/>
    </location>
</feature>
<feature type="repeat" description="7">
    <location>
        <begin position="57"/>
        <end position="61"/>
    </location>
</feature>
<feature type="repeat" description="8">
    <location>
        <begin position="62"/>
        <end position="66"/>
    </location>
</feature>
<feature type="repeat" description="9">
    <location>
        <begin position="67"/>
        <end position="71"/>
    </location>
</feature>
<feature type="repeat" description="10">
    <location>
        <begin position="72"/>
        <end position="76"/>
    </location>
</feature>
<feature type="repeat" description="11">
    <location>
        <begin position="77"/>
        <end position="81"/>
    </location>
</feature>
<feature type="repeat" description="12">
    <location>
        <begin position="82"/>
        <end position="86"/>
    </location>
</feature>
<feature type="repeat" description="13">
    <location>
        <begin position="87"/>
        <end position="91"/>
    </location>
</feature>
<feature type="repeat" description="14">
    <location>
        <begin position="92"/>
        <end position="96"/>
    </location>
</feature>
<feature type="repeat" description="15">
    <location>
        <begin position="97"/>
        <end position="101"/>
    </location>
</feature>
<feature type="repeat" description="16">
    <location>
        <begin position="102"/>
        <end position="106"/>
    </location>
</feature>
<feature type="repeat" description="17">
    <location>
        <begin position="107"/>
        <end position="111"/>
    </location>
</feature>
<feature type="repeat" description="18">
    <location>
        <begin position="112"/>
        <end position="116"/>
    </location>
</feature>
<feature type="repeat" description="19">
    <location>
        <begin position="117"/>
        <end position="121"/>
    </location>
</feature>
<feature type="repeat" description="20">
    <location>
        <begin position="122"/>
        <end position="126"/>
    </location>
</feature>
<feature type="repeat" description="21">
    <location>
        <begin position="127"/>
        <end position="131"/>
    </location>
</feature>
<feature type="repeat" description="22">
    <location>
        <begin position="132"/>
        <end position="136"/>
    </location>
</feature>
<feature type="repeat" description="23">
    <location>
        <begin position="137"/>
        <end position="141"/>
    </location>
</feature>
<feature type="repeat" description="24">
    <location>
        <begin position="142"/>
        <end position="146"/>
    </location>
</feature>
<feature type="repeat" description="25">
    <location>
        <begin position="147"/>
        <end position="151"/>
    </location>
</feature>
<feature type="repeat" description="26">
    <location>
        <begin position="152"/>
        <end position="156"/>
    </location>
</feature>
<feature type="repeat" description="27">
    <location>
        <begin position="157"/>
        <end position="161"/>
    </location>
</feature>
<feature type="repeat" description="28">
    <location>
        <begin position="162"/>
        <end position="166"/>
    </location>
</feature>
<feature type="repeat" description="29">
    <location>
        <begin position="167"/>
        <end position="171"/>
    </location>
</feature>
<feature type="repeat" description="30">
    <location>
        <begin position="172"/>
        <end position="176"/>
    </location>
</feature>
<feature type="repeat" description="31">
    <location>
        <begin position="177"/>
        <end position="181"/>
    </location>
</feature>
<feature type="repeat" description="32">
    <location>
        <begin position="182"/>
        <end position="186"/>
    </location>
</feature>
<feature type="repeat" description="33">
    <location>
        <begin position="187"/>
        <end position="191"/>
    </location>
</feature>
<feature type="repeat" description="34">
    <location>
        <begin position="192"/>
        <end position="196"/>
    </location>
</feature>
<feature type="repeat" description="35">
    <location>
        <begin position="197"/>
        <end position="201"/>
    </location>
</feature>
<feature type="repeat" description="36">
    <location>
        <begin position="202"/>
        <end position="206"/>
    </location>
</feature>
<feature type="repeat" description="37">
    <location>
        <begin position="207"/>
        <end position="211"/>
    </location>
</feature>
<feature type="repeat" description="38">
    <location>
        <begin position="212"/>
        <end position="216"/>
    </location>
</feature>
<feature type="repeat" description="39">
    <location>
        <begin position="217"/>
        <end position="221"/>
    </location>
</feature>
<feature type="repeat" description="40">
    <location>
        <begin position="222"/>
        <end position="226"/>
    </location>
</feature>
<feature type="repeat" description="41">
    <location>
        <begin position="227"/>
        <end position="231"/>
    </location>
</feature>
<feature type="repeat" description="42; approximate">
    <location>
        <begin position="232"/>
        <end position="236"/>
    </location>
</feature>
<feature type="region of interest" description="42 X 5 AA approximate tandem repeats of P-P-V-[EYV]-[KQG]">
    <location>
        <begin position="27"/>
        <end position="236"/>
    </location>
</feature>
<feature type="region of interest" description="Disordered" evidence="3">
    <location>
        <begin position="143"/>
        <end position="177"/>
    </location>
</feature>
<feature type="region of interest" description="Disordered" evidence="3">
    <location>
        <begin position="204"/>
        <end position="236"/>
    </location>
</feature>
<sequence length="236" mass="26821">MASSNFLVLLLFALFVIPQGLANYDKPPVYQPPVYKPPVEKPPVYKPPVEKPPVYKPPVYKPPVEKPPVYKPPVVKPPVYKPPVYKPPVYKPPVEKPPVYKPPVYKPPVYKPPVVKPPVYKPPVYKPPVEKPPVYKPPVYKPPVEKPPVYKPPVEKPPVYKPPVYKPPVYKPPVVKPPVYKPPVYKPPVYKPPVEKPPVYKPPVYKPPVEKPPVYKPPVYKPPVEKPPVYGPPHHP</sequence>
<organism>
    <name type="scientific">Medicago sativa</name>
    <name type="common">Alfalfa</name>
    <dbReference type="NCBI Taxonomy" id="3879"/>
    <lineage>
        <taxon>Eukaryota</taxon>
        <taxon>Viridiplantae</taxon>
        <taxon>Streptophyta</taxon>
        <taxon>Embryophyta</taxon>
        <taxon>Tracheophyta</taxon>
        <taxon>Spermatophyta</taxon>
        <taxon>Magnoliopsida</taxon>
        <taxon>eudicotyledons</taxon>
        <taxon>Gunneridae</taxon>
        <taxon>Pentapetalae</taxon>
        <taxon>rosids</taxon>
        <taxon>fabids</taxon>
        <taxon>Fabales</taxon>
        <taxon>Fabaceae</taxon>
        <taxon>Papilionoideae</taxon>
        <taxon>50 kb inversion clade</taxon>
        <taxon>NPAAA clade</taxon>
        <taxon>Hologalegina</taxon>
        <taxon>IRL clade</taxon>
        <taxon>Trifolieae</taxon>
        <taxon>Medicago</taxon>
    </lineage>
</organism>
<proteinExistence type="evidence at transcript level"/>
<gene>
    <name type="primary">PRP</name>
</gene>
<accession>Q40358</accession>
<name>PRP_MEDSA</name>
<reference key="1">
    <citation type="submission" date="1992-04" db="EMBL/GenBank/DDBJ databases">
        <authorList>
            <person name="Hirsch A.M."/>
            <person name="Loebler M."/>
        </authorList>
    </citation>
    <scope>NUCLEOTIDE SEQUENCE [MRNA]</scope>
    <source>
        <strain>cv. Iroquois</strain>
        <tissue>Root nodule</tissue>
    </source>
</reference>
<dbReference type="EMBL" id="M91078">
    <property type="protein sequence ID" value="AAB48006.1"/>
    <property type="molecule type" value="mRNA"/>
</dbReference>
<dbReference type="PIR" id="T09644">
    <property type="entry name" value="T09644"/>
</dbReference>
<dbReference type="GO" id="GO:0005576">
    <property type="term" value="C:extracellular region"/>
    <property type="evidence" value="ECO:0007669"/>
    <property type="project" value="UniProtKB-KW"/>
</dbReference>
<dbReference type="GO" id="GO:0005199">
    <property type="term" value="F:structural constituent of cell wall"/>
    <property type="evidence" value="ECO:0007669"/>
    <property type="project" value="InterPro"/>
</dbReference>
<dbReference type="InterPro" id="IPR002964">
    <property type="entry name" value="Adhesive_plaq"/>
</dbReference>
<dbReference type="InterPro" id="IPR003883">
    <property type="entry name" value="Extensin-like"/>
</dbReference>
<dbReference type="InterPro" id="IPR051308">
    <property type="entry name" value="Proline-rich_CW_protein"/>
</dbReference>
<dbReference type="PANTHER" id="PTHR34629">
    <property type="entry name" value="PROLINE-RICH EXTENSIN-LIKE PROTEIN EPR1"/>
    <property type="match status" value="1"/>
</dbReference>
<dbReference type="PANTHER" id="PTHR34629:SF4">
    <property type="entry name" value="REPETITIVE PROLINE-RICH CELL WALL PROTEIN 3"/>
    <property type="match status" value="1"/>
</dbReference>
<dbReference type="Pfam" id="PF02095">
    <property type="entry name" value="Extensin_1"/>
    <property type="match status" value="2"/>
</dbReference>
<dbReference type="PRINTS" id="PR01216">
    <property type="entry name" value="ADHESIVEI"/>
</dbReference>